<protein>
    <recommendedName>
        <fullName evidence="1">Adenylate kinase</fullName>
        <shortName evidence="1">AK</shortName>
        <ecNumber evidence="1">2.7.4.3</ecNumber>
    </recommendedName>
    <alternativeName>
        <fullName evidence="1">ATP-AMP transphosphorylase</fullName>
    </alternativeName>
    <alternativeName>
        <fullName evidence="1">ATP:AMP phosphotransferase</fullName>
    </alternativeName>
    <alternativeName>
        <fullName evidence="1">Adenylate monophosphate kinase</fullName>
    </alternativeName>
</protein>
<name>KAD_CORU7</name>
<accession>B1VEX6</accession>
<gene>
    <name evidence="1" type="primary">adk</name>
    <name type="ordered locus">cu0355</name>
</gene>
<feature type="chain" id="PRO_1000100552" description="Adenylate kinase">
    <location>
        <begin position="1"/>
        <end position="181"/>
    </location>
</feature>
<feature type="region of interest" description="NMP" evidence="1">
    <location>
        <begin position="30"/>
        <end position="59"/>
    </location>
</feature>
<feature type="region of interest" description="LID" evidence="1">
    <location>
        <begin position="126"/>
        <end position="132"/>
    </location>
</feature>
<feature type="binding site" evidence="1">
    <location>
        <begin position="10"/>
        <end position="15"/>
    </location>
    <ligand>
        <name>ATP</name>
        <dbReference type="ChEBI" id="CHEBI:30616"/>
    </ligand>
</feature>
<feature type="binding site" evidence="1">
    <location>
        <position position="31"/>
    </location>
    <ligand>
        <name>AMP</name>
        <dbReference type="ChEBI" id="CHEBI:456215"/>
    </ligand>
</feature>
<feature type="binding site" evidence="1">
    <location>
        <position position="36"/>
    </location>
    <ligand>
        <name>AMP</name>
        <dbReference type="ChEBI" id="CHEBI:456215"/>
    </ligand>
</feature>
<feature type="binding site" evidence="1">
    <location>
        <begin position="57"/>
        <end position="59"/>
    </location>
    <ligand>
        <name>AMP</name>
        <dbReference type="ChEBI" id="CHEBI:456215"/>
    </ligand>
</feature>
<feature type="binding site" evidence="1">
    <location>
        <begin position="85"/>
        <end position="88"/>
    </location>
    <ligand>
        <name>AMP</name>
        <dbReference type="ChEBI" id="CHEBI:456215"/>
    </ligand>
</feature>
<feature type="binding site" evidence="1">
    <location>
        <position position="92"/>
    </location>
    <ligand>
        <name>AMP</name>
        <dbReference type="ChEBI" id="CHEBI:456215"/>
    </ligand>
</feature>
<feature type="binding site" evidence="1">
    <location>
        <position position="127"/>
    </location>
    <ligand>
        <name>ATP</name>
        <dbReference type="ChEBI" id="CHEBI:30616"/>
    </ligand>
</feature>
<feature type="binding site" evidence="1">
    <location>
        <position position="129"/>
    </location>
    <ligand>
        <name>AMP</name>
        <dbReference type="ChEBI" id="CHEBI:456215"/>
    </ligand>
</feature>
<feature type="binding site" evidence="1">
    <location>
        <position position="140"/>
    </location>
    <ligand>
        <name>AMP</name>
        <dbReference type="ChEBI" id="CHEBI:456215"/>
    </ligand>
</feature>
<feature type="binding site" evidence="1">
    <location>
        <position position="166"/>
    </location>
    <ligand>
        <name>ATP</name>
        <dbReference type="ChEBI" id="CHEBI:30616"/>
    </ligand>
</feature>
<keyword id="KW-0067">ATP-binding</keyword>
<keyword id="KW-0963">Cytoplasm</keyword>
<keyword id="KW-0418">Kinase</keyword>
<keyword id="KW-0545">Nucleotide biosynthesis</keyword>
<keyword id="KW-0547">Nucleotide-binding</keyword>
<keyword id="KW-1185">Reference proteome</keyword>
<keyword id="KW-0808">Transferase</keyword>
<comment type="function">
    <text evidence="1">Catalyzes the reversible transfer of the terminal phosphate group between ATP and AMP. Plays an important role in cellular energy homeostasis and in adenine nucleotide metabolism.</text>
</comment>
<comment type="catalytic activity">
    <reaction evidence="1">
        <text>AMP + ATP = 2 ADP</text>
        <dbReference type="Rhea" id="RHEA:12973"/>
        <dbReference type="ChEBI" id="CHEBI:30616"/>
        <dbReference type="ChEBI" id="CHEBI:456215"/>
        <dbReference type="ChEBI" id="CHEBI:456216"/>
        <dbReference type="EC" id="2.7.4.3"/>
    </reaction>
</comment>
<comment type="pathway">
    <text evidence="1">Purine metabolism; AMP biosynthesis via salvage pathway; AMP from ADP: step 1/1.</text>
</comment>
<comment type="subunit">
    <text evidence="1">Monomer.</text>
</comment>
<comment type="subcellular location">
    <subcellularLocation>
        <location evidence="1">Cytoplasm</location>
    </subcellularLocation>
</comment>
<comment type="domain">
    <text evidence="1">Consists of three domains, a large central CORE domain and two small peripheral domains, NMPbind and LID, which undergo movements during catalysis. The LID domain closes over the site of phosphoryl transfer upon ATP binding. Assembling and dissambling the active center during each catalytic cycle provides an effective means to prevent ATP hydrolysis.</text>
</comment>
<comment type="similarity">
    <text evidence="1">Belongs to the adenylate kinase family.</text>
</comment>
<proteinExistence type="inferred from homology"/>
<dbReference type="EC" id="2.7.4.3" evidence="1"/>
<dbReference type="EMBL" id="AM942444">
    <property type="protein sequence ID" value="CAQ04315.1"/>
    <property type="molecule type" value="Genomic_DNA"/>
</dbReference>
<dbReference type="RefSeq" id="WP_012359608.1">
    <property type="nucleotide sequence ID" value="NC_010545.1"/>
</dbReference>
<dbReference type="SMR" id="B1VEX6"/>
<dbReference type="STRING" id="504474.cu0355"/>
<dbReference type="GeneID" id="60605158"/>
<dbReference type="KEGG" id="cur:cu0355"/>
<dbReference type="eggNOG" id="COG0563">
    <property type="taxonomic scope" value="Bacteria"/>
</dbReference>
<dbReference type="HOGENOM" id="CLU_032354_4_1_11"/>
<dbReference type="UniPathway" id="UPA00588">
    <property type="reaction ID" value="UER00649"/>
</dbReference>
<dbReference type="Proteomes" id="UP000001727">
    <property type="component" value="Chromosome"/>
</dbReference>
<dbReference type="GO" id="GO:0005737">
    <property type="term" value="C:cytoplasm"/>
    <property type="evidence" value="ECO:0007669"/>
    <property type="project" value="UniProtKB-SubCell"/>
</dbReference>
<dbReference type="GO" id="GO:0004017">
    <property type="term" value="F:adenylate kinase activity"/>
    <property type="evidence" value="ECO:0007669"/>
    <property type="project" value="UniProtKB-UniRule"/>
</dbReference>
<dbReference type="GO" id="GO:0005524">
    <property type="term" value="F:ATP binding"/>
    <property type="evidence" value="ECO:0007669"/>
    <property type="project" value="UniProtKB-UniRule"/>
</dbReference>
<dbReference type="GO" id="GO:0044209">
    <property type="term" value="P:AMP salvage"/>
    <property type="evidence" value="ECO:0007669"/>
    <property type="project" value="UniProtKB-UniRule"/>
</dbReference>
<dbReference type="CDD" id="cd01428">
    <property type="entry name" value="ADK"/>
    <property type="match status" value="1"/>
</dbReference>
<dbReference type="Gene3D" id="3.40.50.300">
    <property type="entry name" value="P-loop containing nucleotide triphosphate hydrolases"/>
    <property type="match status" value="1"/>
</dbReference>
<dbReference type="HAMAP" id="MF_00235">
    <property type="entry name" value="Adenylate_kinase_Adk"/>
    <property type="match status" value="1"/>
</dbReference>
<dbReference type="InterPro" id="IPR006259">
    <property type="entry name" value="Adenyl_kin_sub"/>
</dbReference>
<dbReference type="InterPro" id="IPR000850">
    <property type="entry name" value="Adenylat/UMP-CMP_kin"/>
</dbReference>
<dbReference type="InterPro" id="IPR033690">
    <property type="entry name" value="Adenylat_kinase_CS"/>
</dbReference>
<dbReference type="InterPro" id="IPR027417">
    <property type="entry name" value="P-loop_NTPase"/>
</dbReference>
<dbReference type="NCBIfam" id="TIGR01351">
    <property type="entry name" value="adk"/>
    <property type="match status" value="1"/>
</dbReference>
<dbReference type="NCBIfam" id="NF001381">
    <property type="entry name" value="PRK00279.1-3"/>
    <property type="match status" value="1"/>
</dbReference>
<dbReference type="NCBIfam" id="NF011100">
    <property type="entry name" value="PRK14527.1"/>
    <property type="match status" value="1"/>
</dbReference>
<dbReference type="NCBIfam" id="NF011101">
    <property type="entry name" value="PRK14528.1"/>
    <property type="match status" value="1"/>
</dbReference>
<dbReference type="NCBIfam" id="NF011104">
    <property type="entry name" value="PRK14531.1"/>
    <property type="match status" value="1"/>
</dbReference>
<dbReference type="NCBIfam" id="NF011105">
    <property type="entry name" value="PRK14532.1"/>
    <property type="match status" value="1"/>
</dbReference>
<dbReference type="PANTHER" id="PTHR23359">
    <property type="entry name" value="NUCLEOTIDE KINASE"/>
    <property type="match status" value="1"/>
</dbReference>
<dbReference type="Pfam" id="PF00406">
    <property type="entry name" value="ADK"/>
    <property type="match status" value="1"/>
</dbReference>
<dbReference type="PRINTS" id="PR00094">
    <property type="entry name" value="ADENYLTKNASE"/>
</dbReference>
<dbReference type="SUPFAM" id="SSF52540">
    <property type="entry name" value="P-loop containing nucleoside triphosphate hydrolases"/>
    <property type="match status" value="1"/>
</dbReference>
<dbReference type="PROSITE" id="PS00113">
    <property type="entry name" value="ADENYLATE_KINASE"/>
    <property type="match status" value="1"/>
</dbReference>
<sequence>MRLVLLGPPGAGKGTQAQLLSDALNIPHISTGDLFRANISQGTELGKQAQEYMDAGKLVPTEVTANMVRARLEEADAANGFLLDGFPRTIEQADLLEEMLKEKDLKLDAVINYQVSEDVVVERMLSRGRNDDNESTIRTRLQVYREETAPLIDYYQGRILNIDAEGSVEDISEATLCALDK</sequence>
<evidence type="ECO:0000255" key="1">
    <source>
        <dbReference type="HAMAP-Rule" id="MF_00235"/>
    </source>
</evidence>
<organism>
    <name type="scientific">Corynebacterium urealyticum (strain ATCC 43042 / DSM 7109)</name>
    <dbReference type="NCBI Taxonomy" id="504474"/>
    <lineage>
        <taxon>Bacteria</taxon>
        <taxon>Bacillati</taxon>
        <taxon>Actinomycetota</taxon>
        <taxon>Actinomycetes</taxon>
        <taxon>Mycobacteriales</taxon>
        <taxon>Corynebacteriaceae</taxon>
        <taxon>Corynebacterium</taxon>
    </lineage>
</organism>
<reference key="1">
    <citation type="journal article" date="2008" name="J. Biotechnol.">
        <title>The lifestyle of Corynebacterium urealyticum derived from its complete genome sequence established by pyrosequencing.</title>
        <authorList>
            <person name="Tauch A."/>
            <person name="Trost E."/>
            <person name="Tilker A."/>
            <person name="Ludewig U."/>
            <person name="Schneiker S."/>
            <person name="Goesmann A."/>
            <person name="Arnold W."/>
            <person name="Bekel T."/>
            <person name="Brinkrolf K."/>
            <person name="Brune I."/>
            <person name="Goetker S."/>
            <person name="Kalinowski J."/>
            <person name="Kamp P.-B."/>
            <person name="Lobo F.P."/>
            <person name="Viehoever P."/>
            <person name="Weisshaar B."/>
            <person name="Soriano F."/>
            <person name="Droege M."/>
            <person name="Puehler A."/>
        </authorList>
    </citation>
    <scope>NUCLEOTIDE SEQUENCE [LARGE SCALE GENOMIC DNA]</scope>
    <source>
        <strain>ATCC 43042 / DSM 7109</strain>
    </source>
</reference>